<reference key="1">
    <citation type="journal article" date="2003" name="J. Bacteriol.">
        <title>Comparative analyses of the complete genome sequences of Pierce's disease and citrus variegated chlorosis strains of Xylella fastidiosa.</title>
        <authorList>
            <person name="Van Sluys M.A."/>
            <person name="de Oliveira M.C."/>
            <person name="Monteiro-Vitorello C.B."/>
            <person name="Miyaki C.Y."/>
            <person name="Furlan L.R."/>
            <person name="Camargo L.E.A."/>
            <person name="da Silva A.C.R."/>
            <person name="Moon D.H."/>
            <person name="Takita M.A."/>
            <person name="Lemos E.G.M."/>
            <person name="Machado M.A."/>
            <person name="Ferro M.I.T."/>
            <person name="da Silva F.R."/>
            <person name="Goldman M.H.S."/>
            <person name="Goldman G.H."/>
            <person name="Lemos M.V.F."/>
            <person name="El-Dorry H."/>
            <person name="Tsai S.M."/>
            <person name="Carrer H."/>
            <person name="Carraro D.M."/>
            <person name="de Oliveira R.C."/>
            <person name="Nunes L.R."/>
            <person name="Siqueira W.J."/>
            <person name="Coutinho L.L."/>
            <person name="Kimura E.T."/>
            <person name="Ferro E.S."/>
            <person name="Harakava R."/>
            <person name="Kuramae E.E."/>
            <person name="Marino C.L."/>
            <person name="Giglioti E."/>
            <person name="Abreu I.L."/>
            <person name="Alves L.M.C."/>
            <person name="do Amaral A.M."/>
            <person name="Baia G.S."/>
            <person name="Blanco S.R."/>
            <person name="Brito M.S."/>
            <person name="Cannavan F.S."/>
            <person name="Celestino A.V."/>
            <person name="da Cunha A.F."/>
            <person name="Fenille R.C."/>
            <person name="Ferro J.A."/>
            <person name="Formighieri E.F."/>
            <person name="Kishi L.T."/>
            <person name="Leoni S.G."/>
            <person name="Oliveira A.R."/>
            <person name="Rosa V.E. Jr."/>
            <person name="Sassaki F.T."/>
            <person name="Sena J.A.D."/>
            <person name="de Souza A.A."/>
            <person name="Truffi D."/>
            <person name="Tsukumo F."/>
            <person name="Yanai G.M."/>
            <person name="Zaros L.G."/>
            <person name="Civerolo E.L."/>
            <person name="Simpson A.J.G."/>
            <person name="Almeida N.F. Jr."/>
            <person name="Setubal J.C."/>
            <person name="Kitajima J.P."/>
        </authorList>
    </citation>
    <scope>NUCLEOTIDE SEQUENCE [LARGE SCALE GENOMIC DNA]</scope>
    <source>
        <strain>Temecula1 / ATCC 700964</strain>
    </source>
</reference>
<evidence type="ECO:0000255" key="1">
    <source>
        <dbReference type="HAMAP-Rule" id="MF_00758"/>
    </source>
</evidence>
<sequence length="188" mass="20247">MSMPTMTLVNQLLIALPSMPDPHFARGVALICQHDSNGAMGVVLNRPSEYTLGEVLFQMGIETASETLREQVVLAGGPVHPDRGFVIYDSEHVWGPSLLIGDGLYLTTSRDVLAAMAEGSGPSRALVALGCAGWAAGQLELELVENNWLMVPADASLLFDTALEQRWQRAAGRIGVDLFRLTDYTGHA</sequence>
<accession>Q87C20</accession>
<protein>
    <recommendedName>
        <fullName evidence="1">UPF0301 protein PD_1276</fullName>
    </recommendedName>
</protein>
<organism>
    <name type="scientific">Xylella fastidiosa (strain Temecula1 / ATCC 700964)</name>
    <dbReference type="NCBI Taxonomy" id="183190"/>
    <lineage>
        <taxon>Bacteria</taxon>
        <taxon>Pseudomonadati</taxon>
        <taxon>Pseudomonadota</taxon>
        <taxon>Gammaproteobacteria</taxon>
        <taxon>Lysobacterales</taxon>
        <taxon>Lysobacteraceae</taxon>
        <taxon>Xylella</taxon>
    </lineage>
</organism>
<name>Y1276_XYLFT</name>
<proteinExistence type="inferred from homology"/>
<keyword id="KW-1185">Reference proteome</keyword>
<comment type="similarity">
    <text evidence="1">Belongs to the UPF0301 (AlgH) family.</text>
</comment>
<dbReference type="EMBL" id="AE009442">
    <property type="protein sequence ID" value="AAO29125.1"/>
    <property type="molecule type" value="Genomic_DNA"/>
</dbReference>
<dbReference type="RefSeq" id="WP_011098030.1">
    <property type="nucleotide sequence ID" value="NC_004556.1"/>
</dbReference>
<dbReference type="SMR" id="Q87C20"/>
<dbReference type="KEGG" id="xft:PD_1276"/>
<dbReference type="HOGENOM" id="CLU_057596_1_0_6"/>
<dbReference type="Proteomes" id="UP000002516">
    <property type="component" value="Chromosome"/>
</dbReference>
<dbReference type="GO" id="GO:0005829">
    <property type="term" value="C:cytosol"/>
    <property type="evidence" value="ECO:0007669"/>
    <property type="project" value="TreeGrafter"/>
</dbReference>
<dbReference type="Gene3D" id="3.40.1740.10">
    <property type="entry name" value="VC0467-like"/>
    <property type="match status" value="1"/>
</dbReference>
<dbReference type="HAMAP" id="MF_00758">
    <property type="entry name" value="UPF0301"/>
    <property type="match status" value="1"/>
</dbReference>
<dbReference type="InterPro" id="IPR003774">
    <property type="entry name" value="AlgH-like"/>
</dbReference>
<dbReference type="NCBIfam" id="NF001266">
    <property type="entry name" value="PRK00228.1-1"/>
    <property type="match status" value="1"/>
</dbReference>
<dbReference type="PANTHER" id="PTHR30327">
    <property type="entry name" value="UNCHARACTERIZED PROTEIN YQGE"/>
    <property type="match status" value="1"/>
</dbReference>
<dbReference type="PANTHER" id="PTHR30327:SF1">
    <property type="entry name" value="UPF0301 PROTEIN YQGE"/>
    <property type="match status" value="1"/>
</dbReference>
<dbReference type="Pfam" id="PF02622">
    <property type="entry name" value="DUF179"/>
    <property type="match status" value="1"/>
</dbReference>
<dbReference type="SUPFAM" id="SSF143456">
    <property type="entry name" value="VC0467-like"/>
    <property type="match status" value="1"/>
</dbReference>
<feature type="chain" id="PRO_0000214358" description="UPF0301 protein PD_1276">
    <location>
        <begin position="1"/>
        <end position="188"/>
    </location>
</feature>
<gene>
    <name type="ordered locus">PD_1276</name>
</gene>